<comment type="catalytic activity">
    <reaction evidence="3">
        <text>a primary alcohol + NAD(+) = an aldehyde + NADH + H(+)</text>
        <dbReference type="Rhea" id="RHEA:10736"/>
        <dbReference type="ChEBI" id="CHEBI:15378"/>
        <dbReference type="ChEBI" id="CHEBI:15734"/>
        <dbReference type="ChEBI" id="CHEBI:17478"/>
        <dbReference type="ChEBI" id="CHEBI:57540"/>
        <dbReference type="ChEBI" id="CHEBI:57945"/>
        <dbReference type="EC" id="1.1.1.1"/>
    </reaction>
</comment>
<comment type="catalytic activity">
    <reaction evidence="3">
        <text>a secondary alcohol + NAD(+) = a ketone + NADH + H(+)</text>
        <dbReference type="Rhea" id="RHEA:10740"/>
        <dbReference type="ChEBI" id="CHEBI:15378"/>
        <dbReference type="ChEBI" id="CHEBI:17087"/>
        <dbReference type="ChEBI" id="CHEBI:35681"/>
        <dbReference type="ChEBI" id="CHEBI:57540"/>
        <dbReference type="ChEBI" id="CHEBI:57945"/>
        <dbReference type="EC" id="1.1.1.1"/>
    </reaction>
</comment>
<comment type="cofactor">
    <cofactor evidence="2">
        <name>Zn(2+)</name>
        <dbReference type="ChEBI" id="CHEBI:29105"/>
    </cofactor>
    <text evidence="2">Binds 2 Zn(2+) ions per subunit.</text>
</comment>
<comment type="subunit">
    <text evidence="2">Homodimer.</text>
</comment>
<comment type="subcellular location">
    <subcellularLocation>
        <location evidence="2">Cytoplasm</location>
    </subcellularLocation>
</comment>
<comment type="similarity">
    <text evidence="5">Belongs to the zinc-containing alcohol dehydrogenase family.</text>
</comment>
<keyword id="KW-0963">Cytoplasm</keyword>
<keyword id="KW-0479">Metal-binding</keyword>
<keyword id="KW-0520">NAD</keyword>
<keyword id="KW-0560">Oxidoreductase</keyword>
<keyword id="KW-0862">Zinc</keyword>
<proteinExistence type="evidence at protein level"/>
<dbReference type="EC" id="1.1.1.1" evidence="3"/>
<dbReference type="EMBL" id="X06281">
    <property type="protein sequence ID" value="CAA29609.1"/>
    <property type="molecule type" value="Genomic_DNA"/>
</dbReference>
<dbReference type="PIR" id="S00912">
    <property type="entry name" value="S00912"/>
</dbReference>
<dbReference type="SMR" id="P12886"/>
<dbReference type="BioCyc" id="MetaCyc:MONOMER-15105"/>
<dbReference type="GO" id="GO:0005829">
    <property type="term" value="C:cytosol"/>
    <property type="evidence" value="ECO:0007669"/>
    <property type="project" value="TreeGrafter"/>
</dbReference>
<dbReference type="GO" id="GO:0004022">
    <property type="term" value="F:alcohol dehydrogenase (NAD+) activity"/>
    <property type="evidence" value="ECO:0007669"/>
    <property type="project" value="UniProtKB-EC"/>
</dbReference>
<dbReference type="GO" id="GO:0051903">
    <property type="term" value="F:S-(hydroxymethyl)glutathione dehydrogenase [NAD(P)+] activity"/>
    <property type="evidence" value="ECO:0007669"/>
    <property type="project" value="TreeGrafter"/>
</dbReference>
<dbReference type="GO" id="GO:0008270">
    <property type="term" value="F:zinc ion binding"/>
    <property type="evidence" value="ECO:0007669"/>
    <property type="project" value="InterPro"/>
</dbReference>
<dbReference type="GO" id="GO:0046294">
    <property type="term" value="P:formaldehyde catabolic process"/>
    <property type="evidence" value="ECO:0007669"/>
    <property type="project" value="TreeGrafter"/>
</dbReference>
<dbReference type="CDD" id="cd08301">
    <property type="entry name" value="alcohol_DH_plants"/>
    <property type="match status" value="1"/>
</dbReference>
<dbReference type="FunFam" id="3.90.180.10:FF:000067">
    <property type="entry name" value="alcohol dehydrogenase 1-like isoform X1"/>
    <property type="match status" value="1"/>
</dbReference>
<dbReference type="FunFam" id="3.40.50.720:FF:001292">
    <property type="entry name" value="Alcohol dehydrogenase class-P"/>
    <property type="match status" value="1"/>
</dbReference>
<dbReference type="Gene3D" id="3.90.180.10">
    <property type="entry name" value="Medium-chain alcohol dehydrogenases, catalytic domain"/>
    <property type="match status" value="1"/>
</dbReference>
<dbReference type="Gene3D" id="3.40.50.720">
    <property type="entry name" value="NAD(P)-binding Rossmann-like Domain"/>
    <property type="match status" value="1"/>
</dbReference>
<dbReference type="InterPro" id="IPR013149">
    <property type="entry name" value="ADH-like_C"/>
</dbReference>
<dbReference type="InterPro" id="IPR013154">
    <property type="entry name" value="ADH-like_N"/>
</dbReference>
<dbReference type="InterPro" id="IPR002328">
    <property type="entry name" value="ADH_Zn_CS"/>
</dbReference>
<dbReference type="InterPro" id="IPR011032">
    <property type="entry name" value="GroES-like_sf"/>
</dbReference>
<dbReference type="InterPro" id="IPR036291">
    <property type="entry name" value="NAD(P)-bd_dom_sf"/>
</dbReference>
<dbReference type="PANTHER" id="PTHR43880">
    <property type="entry name" value="ALCOHOL DEHYDROGENASE"/>
    <property type="match status" value="1"/>
</dbReference>
<dbReference type="PANTHER" id="PTHR43880:SF26">
    <property type="entry name" value="ALCOHOL DEHYDROGENASE CLASS-P"/>
    <property type="match status" value="1"/>
</dbReference>
<dbReference type="Pfam" id="PF08240">
    <property type="entry name" value="ADH_N"/>
    <property type="match status" value="1"/>
</dbReference>
<dbReference type="Pfam" id="PF00107">
    <property type="entry name" value="ADH_zinc_N"/>
    <property type="match status" value="1"/>
</dbReference>
<dbReference type="SUPFAM" id="SSF50129">
    <property type="entry name" value="GroES-like"/>
    <property type="match status" value="2"/>
</dbReference>
<dbReference type="SUPFAM" id="SSF51735">
    <property type="entry name" value="NAD(P)-binding Rossmann-fold domains"/>
    <property type="match status" value="1"/>
</dbReference>
<dbReference type="PROSITE" id="PS00059">
    <property type="entry name" value="ADH_ZINC"/>
    <property type="match status" value="1"/>
</dbReference>
<sequence length="380" mass="41155">MSNTVGQIIKCRAAVAWEAGKPLVIEEVEVAPPQAGEVRLKILFTSLCHTDVYFWEAKGQTPLFPRIFGHEAGGIVESVGEGVTHLKPGDHALPVFTGECGECPHCKSEESNMCDLLRINTDRGVMLNDNKSRFSIKGQPVHHFVGTSTFSEYTVVHAGCVAKINPDAPLDKVCILSCGICTGLGATINVAKPKPGSSVAIFGLGAVGLAAAEGARISGASRIIGVDLVSSRFELAKKFGVNEFVNPKEHDKPVQQVIAEMTNGGVDRAVECTGSIQAMISAFECVHDGWGVAVLVGVPSKDDAFKTHPMNFLNERTLKGTFYGNYKPRTDLPNVVEKYMKGELELEKFITHTVPFSEINKAFDYMLKGESIRCIIKMEE</sequence>
<organism>
    <name type="scientific">Pisum sativum</name>
    <name type="common">Garden pea</name>
    <name type="synonym">Lathyrus oleraceus</name>
    <dbReference type="NCBI Taxonomy" id="3888"/>
    <lineage>
        <taxon>Eukaryota</taxon>
        <taxon>Viridiplantae</taxon>
        <taxon>Streptophyta</taxon>
        <taxon>Embryophyta</taxon>
        <taxon>Tracheophyta</taxon>
        <taxon>Spermatophyta</taxon>
        <taxon>Magnoliopsida</taxon>
        <taxon>eudicotyledons</taxon>
        <taxon>Gunneridae</taxon>
        <taxon>Pentapetalae</taxon>
        <taxon>rosids</taxon>
        <taxon>fabids</taxon>
        <taxon>Fabales</taxon>
        <taxon>Fabaceae</taxon>
        <taxon>Papilionoideae</taxon>
        <taxon>50 kb inversion clade</taxon>
        <taxon>NPAAA clade</taxon>
        <taxon>Hologalegina</taxon>
        <taxon>IRL clade</taxon>
        <taxon>Fabeae</taxon>
        <taxon>Pisum</taxon>
    </lineage>
</organism>
<feature type="chain" id="PRO_0000160709" description="Alcohol dehydrogenase 1">
    <location>
        <begin position="1"/>
        <end position="380"/>
    </location>
</feature>
<feature type="binding site" evidence="2">
    <location>
        <position position="48"/>
    </location>
    <ligand>
        <name>Zn(2+)</name>
        <dbReference type="ChEBI" id="CHEBI:29105"/>
        <label>1</label>
        <note>catalytic</note>
    </ligand>
</feature>
<feature type="binding site" evidence="2">
    <location>
        <position position="50"/>
    </location>
    <ligand>
        <name>an alcohol</name>
        <dbReference type="ChEBI" id="CHEBI:30879"/>
    </ligand>
</feature>
<feature type="binding site" evidence="2">
    <location>
        <position position="50"/>
    </location>
    <ligand>
        <name>NAD(+)</name>
        <dbReference type="ChEBI" id="CHEBI:57540"/>
    </ligand>
</feature>
<feature type="binding site" evidence="2">
    <location>
        <position position="50"/>
    </location>
    <ligand>
        <name>Zn(2+)</name>
        <dbReference type="ChEBI" id="CHEBI:29105"/>
        <label>1</label>
        <note>catalytic</note>
    </ligand>
</feature>
<feature type="binding site" evidence="1">
    <location>
        <position position="70"/>
    </location>
    <ligand>
        <name>an alcohol</name>
        <dbReference type="ChEBI" id="CHEBI:30879"/>
    </ligand>
</feature>
<feature type="binding site" evidence="2">
    <location>
        <position position="70"/>
    </location>
    <ligand>
        <name>Zn(2+)</name>
        <dbReference type="ChEBI" id="CHEBI:29105"/>
        <label>1</label>
        <note>catalytic</note>
    </ligand>
</feature>
<feature type="binding site" evidence="2">
    <location>
        <position position="100"/>
    </location>
    <ligand>
        <name>Zn(2+)</name>
        <dbReference type="ChEBI" id="CHEBI:29105"/>
        <label>2</label>
    </ligand>
</feature>
<feature type="binding site" evidence="2">
    <location>
        <position position="103"/>
    </location>
    <ligand>
        <name>Zn(2+)</name>
        <dbReference type="ChEBI" id="CHEBI:29105"/>
        <label>2</label>
    </ligand>
</feature>
<feature type="binding site" evidence="2">
    <location>
        <position position="106"/>
    </location>
    <ligand>
        <name>Zn(2+)</name>
        <dbReference type="ChEBI" id="CHEBI:29105"/>
        <label>2</label>
    </ligand>
</feature>
<feature type="binding site" evidence="2">
    <location>
        <position position="114"/>
    </location>
    <ligand>
        <name>Zn(2+)</name>
        <dbReference type="ChEBI" id="CHEBI:29105"/>
        <label>2</label>
    </ligand>
</feature>
<feature type="binding site" evidence="2">
    <location>
        <position position="178"/>
    </location>
    <ligand>
        <name>Zn(2+)</name>
        <dbReference type="ChEBI" id="CHEBI:29105"/>
        <label>1</label>
        <note>catalytic</note>
    </ligand>
</feature>
<feature type="binding site" evidence="2">
    <location>
        <begin position="203"/>
        <end position="208"/>
    </location>
    <ligand>
        <name>NAD(+)</name>
        <dbReference type="ChEBI" id="CHEBI:57540"/>
    </ligand>
</feature>
<feature type="binding site" evidence="2">
    <location>
        <position position="227"/>
    </location>
    <ligand>
        <name>NAD(+)</name>
        <dbReference type="ChEBI" id="CHEBI:57540"/>
    </ligand>
</feature>
<feature type="binding site" evidence="2">
    <location>
        <position position="232"/>
    </location>
    <ligand>
        <name>NAD(+)</name>
        <dbReference type="ChEBI" id="CHEBI:57540"/>
    </ligand>
</feature>
<feature type="binding site" evidence="2">
    <location>
        <position position="273"/>
    </location>
    <ligand>
        <name>NAD(+)</name>
        <dbReference type="ChEBI" id="CHEBI:57540"/>
    </ligand>
</feature>
<feature type="binding site" evidence="1">
    <location>
        <begin position="296"/>
        <end position="298"/>
    </location>
    <ligand>
        <name>NAD(+)</name>
        <dbReference type="ChEBI" id="CHEBI:57540"/>
    </ligand>
</feature>
<feature type="binding site" evidence="2">
    <location>
        <position position="296"/>
    </location>
    <ligand>
        <name>NAD(+)</name>
        <dbReference type="ChEBI" id="CHEBI:57540"/>
    </ligand>
</feature>
<feature type="binding site" evidence="2">
    <location>
        <position position="373"/>
    </location>
    <ligand>
        <name>NAD(+)</name>
        <dbReference type="ChEBI" id="CHEBI:57540"/>
    </ligand>
</feature>
<accession>P12886</accession>
<name>ADH1_PEA</name>
<reference key="1">
    <citation type="journal article" date="1987" name="J. Mol. Biol.">
        <title>Structure and expression of an alcohol dehydrogenase 1 gene from Pisum sativum (cv. 'Greenfeast').</title>
        <authorList>
            <person name="Llewellyn D.J."/>
            <person name="Finnegan E.J."/>
            <person name="Ellis J.G."/>
            <person name="Dennis E.S."/>
            <person name="Peacock W.J."/>
        </authorList>
    </citation>
    <scope>NUCLEOTIDE SEQUENCE [GENOMIC DNA]</scope>
    <scope>CATALYTIC ACTIVITY</scope>
    <source>
        <strain>cv. Greenfeast</strain>
    </source>
</reference>
<evidence type="ECO:0000250" key="1">
    <source>
        <dbReference type="UniProtKB" id="P00327"/>
    </source>
</evidence>
<evidence type="ECO:0000250" key="2">
    <source>
        <dbReference type="UniProtKB" id="P06525"/>
    </source>
</evidence>
<evidence type="ECO:0000269" key="3">
    <source>
    </source>
</evidence>
<evidence type="ECO:0000303" key="4">
    <source>
    </source>
</evidence>
<evidence type="ECO:0000305" key="5"/>
<protein>
    <recommendedName>
        <fullName evidence="4">Alcohol dehydrogenase 1</fullName>
        <ecNumber evidence="3">1.1.1.1</ecNumber>
    </recommendedName>
</protein>